<comment type="function">
    <text evidence="1">E2 conjugating enzyme required for the cytoplasm to vacuole transport (Cvt) and autophagy. Required for selective autophagic degradation of the nucleus (nucleophagy) as well as for mitophagy which contributes to regulate mitochondrial quantity and quality by eliminating the mitochondria to a basal level to fulfill cellular energy requirements and preventing excess ROS production. Responsible for the E2-like covalent binding of phosphatidylethanolamine to the C-terminal Gly of ATG8. The ATG12-ATG5 conjugate plays a role of an E3 and promotes the transfer of ATG8 from ATG3 to phosphatidylethanolamine (PE). This step is required for the membrane association of ATG8. The formation of the ATG8-phosphatidylethanolamine conjugate is essential for autophagy and for the cytoplasm to vacuole transport (Cvt). The ATG8-PE conjugate mediates tethering between adjacent membranes and stimulates membrane hemifusion, leading to expansion of the autophagosomal membrane during autophagy (By similarity).</text>
</comment>
<comment type="subunit">
    <text evidence="1">Monomer. Interacts with ATG8 through an intermediate thioester bond through the C-terminal Gly of ATG8. Also interacts with the 40 amino acid C-terminal region of the E1-like ATG7 enzyme. Also interacts with the ATG12-ATG5 conjugate.</text>
</comment>
<comment type="subcellular location">
    <subcellularLocation>
        <location evidence="1">Cytoplasm</location>
    </subcellularLocation>
</comment>
<comment type="domain">
    <text evidence="1">The N-terminal region is involved in phosphatidylethanolamine-binding and is required for ATG8-PE conjugation.</text>
</comment>
<comment type="domain">
    <text evidence="1">The flexible region (FR) is required for ATG7-binding.</text>
</comment>
<comment type="domain">
    <text evidence="1">The handle region (HR) contains the ATG8 interaction motif (AIM) and mediates binding to ATG8. It is crucial for the cytoplasm-to-vacuole targeting pathway (By similarity).</text>
</comment>
<comment type="similarity">
    <text evidence="3">Belongs to the ATG3 family.</text>
</comment>
<accession>A5DVH6</accession>
<dbReference type="EMBL" id="CH981525">
    <property type="protein sequence ID" value="EDK43184.1"/>
    <property type="molecule type" value="Genomic_DNA"/>
</dbReference>
<dbReference type="RefSeq" id="XP_001526534.1">
    <property type="nucleotide sequence ID" value="XM_001526484.1"/>
</dbReference>
<dbReference type="SMR" id="A5DVH6"/>
<dbReference type="FunCoup" id="A5DVH6">
    <property type="interactions" value="1055"/>
</dbReference>
<dbReference type="STRING" id="379508.A5DVH6"/>
<dbReference type="GeneID" id="5233671"/>
<dbReference type="KEGG" id="lel:PVL30_001332"/>
<dbReference type="VEuPathDB" id="FungiDB:LELG_01362"/>
<dbReference type="eggNOG" id="KOG2981">
    <property type="taxonomic scope" value="Eukaryota"/>
</dbReference>
<dbReference type="HOGENOM" id="CLU_027518_2_0_1"/>
<dbReference type="InParanoid" id="A5DVH6"/>
<dbReference type="OMA" id="HCPTWSW"/>
<dbReference type="OrthoDB" id="1584384at2759"/>
<dbReference type="Proteomes" id="UP000001996">
    <property type="component" value="Unassembled WGS sequence"/>
</dbReference>
<dbReference type="GO" id="GO:0005829">
    <property type="term" value="C:cytosol"/>
    <property type="evidence" value="ECO:0007669"/>
    <property type="project" value="EnsemblFungi"/>
</dbReference>
<dbReference type="GO" id="GO:0005739">
    <property type="term" value="C:mitochondrion"/>
    <property type="evidence" value="ECO:0007669"/>
    <property type="project" value="EnsemblFungi"/>
</dbReference>
<dbReference type="GO" id="GO:0061908">
    <property type="term" value="C:phagophore"/>
    <property type="evidence" value="ECO:0007669"/>
    <property type="project" value="EnsemblFungi"/>
</dbReference>
<dbReference type="GO" id="GO:0000407">
    <property type="term" value="C:phagophore assembly site"/>
    <property type="evidence" value="ECO:0007669"/>
    <property type="project" value="EnsemblFungi"/>
</dbReference>
<dbReference type="GO" id="GO:0019776">
    <property type="term" value="F:Atg8-family ligase activity"/>
    <property type="evidence" value="ECO:0007669"/>
    <property type="project" value="EnsemblFungi"/>
</dbReference>
<dbReference type="GO" id="GO:0000045">
    <property type="term" value="P:autophagosome assembly"/>
    <property type="evidence" value="ECO:0007669"/>
    <property type="project" value="EnsemblFungi"/>
</dbReference>
<dbReference type="GO" id="GO:0000422">
    <property type="term" value="P:autophagy of mitochondrion"/>
    <property type="evidence" value="ECO:0007669"/>
    <property type="project" value="EnsemblFungi"/>
</dbReference>
<dbReference type="GO" id="GO:0032258">
    <property type="term" value="P:cytoplasm to vacuole targeting by the Cvt pathway"/>
    <property type="evidence" value="ECO:0007669"/>
    <property type="project" value="EnsemblFungi"/>
</dbReference>
<dbReference type="GO" id="GO:0061723">
    <property type="term" value="P:glycophagy"/>
    <property type="evidence" value="ECO:0007669"/>
    <property type="project" value="TreeGrafter"/>
</dbReference>
<dbReference type="GO" id="GO:0034727">
    <property type="term" value="P:piecemeal microautophagy of the nucleus"/>
    <property type="evidence" value="ECO:0007669"/>
    <property type="project" value="EnsemblFungi"/>
</dbReference>
<dbReference type="GO" id="GO:0006612">
    <property type="term" value="P:protein targeting to membrane"/>
    <property type="evidence" value="ECO:0007669"/>
    <property type="project" value="EnsemblFungi"/>
</dbReference>
<dbReference type="Gene3D" id="3.30.1460.50">
    <property type="match status" value="1"/>
</dbReference>
<dbReference type="InterPro" id="IPR007135">
    <property type="entry name" value="Atg3/Atg10"/>
</dbReference>
<dbReference type="PANTHER" id="PTHR12866">
    <property type="entry name" value="UBIQUITIN-LIKE-CONJUGATING ENZYME ATG3"/>
    <property type="match status" value="1"/>
</dbReference>
<dbReference type="PANTHER" id="PTHR12866:SF2">
    <property type="entry name" value="UBIQUITIN-LIKE-CONJUGATING ENZYME ATG3"/>
    <property type="match status" value="1"/>
</dbReference>
<dbReference type="Pfam" id="PF03987">
    <property type="entry name" value="Autophagy_act_C"/>
    <property type="match status" value="1"/>
</dbReference>
<name>ATG3_LODEL</name>
<proteinExistence type="inferred from homology"/>
<sequence length="362" mass="41274">MLRSKLSSLREYLTPINHNSNFLTTGEISPEEFVKAGDYLVYKFPTWQWASCPKDLQKLFLPTDKQVLVTRHVPSHQRANEYFEGEFEVEIDEKDRDLALGNESNLKNGENGENDDEAEYGWIRSGRSSSEKGTGEVLDPQRVEEVNDIDELIDETAEGEEEEEEGEEGEGEGNGNGADFHADDDADYDDLDIVQGSHSKLRRYDLYITYSTSYRVPKLYLVGFDANGIPLLPQQMFEDINSDYKDKTATIEQLPVAHNTTSVSIHPCKHSSVMRVLMKHQRARREHENVAENMKRLSIGSEDHKEAMNHIRRLSAGSKELAQKQEEPNDSEIKVDLYLVIFLKFIASVTPGIEYDYTMDAL</sequence>
<feature type="chain" id="PRO_0000317822" description="Autophagy-related protein 3">
    <location>
        <begin position="1"/>
        <end position="362"/>
    </location>
</feature>
<feature type="region of interest" description="Flexible region" evidence="1">
    <location>
        <begin position="82"/>
        <end position="198"/>
    </location>
</feature>
<feature type="region of interest" description="Disordered" evidence="2">
    <location>
        <begin position="101"/>
        <end position="186"/>
    </location>
</feature>
<feature type="region of interest" description="Handle region" evidence="1">
    <location>
        <begin position="272"/>
        <end position="337"/>
    </location>
</feature>
<feature type="compositionally biased region" description="Basic and acidic residues" evidence="2">
    <location>
        <begin position="129"/>
        <end position="145"/>
    </location>
</feature>
<feature type="compositionally biased region" description="Acidic residues" evidence="2">
    <location>
        <begin position="146"/>
        <end position="171"/>
    </location>
</feature>
<feature type="active site" description="Glycyl thioester intermediate" evidence="1">
    <location>
        <position position="268"/>
    </location>
</feature>
<reference key="1">
    <citation type="journal article" date="2009" name="Nature">
        <title>Evolution of pathogenicity and sexual reproduction in eight Candida genomes.</title>
        <authorList>
            <person name="Butler G."/>
            <person name="Rasmussen M.D."/>
            <person name="Lin M.F."/>
            <person name="Santos M.A.S."/>
            <person name="Sakthikumar S."/>
            <person name="Munro C.A."/>
            <person name="Rheinbay E."/>
            <person name="Grabherr M."/>
            <person name="Forche A."/>
            <person name="Reedy J.L."/>
            <person name="Agrafioti I."/>
            <person name="Arnaud M.B."/>
            <person name="Bates S."/>
            <person name="Brown A.J.P."/>
            <person name="Brunke S."/>
            <person name="Costanzo M.C."/>
            <person name="Fitzpatrick D.A."/>
            <person name="de Groot P.W.J."/>
            <person name="Harris D."/>
            <person name="Hoyer L.L."/>
            <person name="Hube B."/>
            <person name="Klis F.M."/>
            <person name="Kodira C."/>
            <person name="Lennard N."/>
            <person name="Logue M.E."/>
            <person name="Martin R."/>
            <person name="Neiman A.M."/>
            <person name="Nikolaou E."/>
            <person name="Quail M.A."/>
            <person name="Quinn J."/>
            <person name="Santos M.C."/>
            <person name="Schmitzberger F.F."/>
            <person name="Sherlock G."/>
            <person name="Shah P."/>
            <person name="Silverstein K.A.T."/>
            <person name="Skrzypek M.S."/>
            <person name="Soll D."/>
            <person name="Staggs R."/>
            <person name="Stansfield I."/>
            <person name="Stumpf M.P.H."/>
            <person name="Sudbery P.E."/>
            <person name="Srikantha T."/>
            <person name="Zeng Q."/>
            <person name="Berman J."/>
            <person name="Berriman M."/>
            <person name="Heitman J."/>
            <person name="Gow N.A.R."/>
            <person name="Lorenz M.C."/>
            <person name="Birren B.W."/>
            <person name="Kellis M."/>
            <person name="Cuomo C.A."/>
        </authorList>
    </citation>
    <scope>NUCLEOTIDE SEQUENCE [LARGE SCALE GENOMIC DNA]</scope>
    <source>
        <strain>ATCC 11503 / BCRC 21390 / CBS 2605 / JCM 1781 / NBRC 1676 / NRRL YB-4239</strain>
    </source>
</reference>
<gene>
    <name type="primary">ATG3</name>
    <name type="ORF">LELG_01362</name>
</gene>
<protein>
    <recommendedName>
        <fullName>Autophagy-related protein 3</fullName>
    </recommendedName>
    <alternativeName>
        <fullName>Autophagy-related E2-like conjugation enzyme ATG3</fullName>
    </alternativeName>
</protein>
<keyword id="KW-0072">Autophagy</keyword>
<keyword id="KW-0963">Cytoplasm</keyword>
<keyword id="KW-0653">Protein transport</keyword>
<keyword id="KW-1185">Reference proteome</keyword>
<keyword id="KW-0813">Transport</keyword>
<keyword id="KW-0833">Ubl conjugation pathway</keyword>
<evidence type="ECO:0000250" key="1"/>
<evidence type="ECO:0000256" key="2">
    <source>
        <dbReference type="SAM" id="MobiDB-lite"/>
    </source>
</evidence>
<evidence type="ECO:0000305" key="3"/>
<organism>
    <name type="scientific">Lodderomyces elongisporus (strain ATCC 11503 / CBS 2605 / JCM 1781 / NBRC 1676 / NRRL YB-4239)</name>
    <name type="common">Yeast</name>
    <name type="synonym">Saccharomyces elongisporus</name>
    <dbReference type="NCBI Taxonomy" id="379508"/>
    <lineage>
        <taxon>Eukaryota</taxon>
        <taxon>Fungi</taxon>
        <taxon>Dikarya</taxon>
        <taxon>Ascomycota</taxon>
        <taxon>Saccharomycotina</taxon>
        <taxon>Pichiomycetes</taxon>
        <taxon>Debaryomycetaceae</taxon>
        <taxon>Candida/Lodderomyces clade</taxon>
        <taxon>Lodderomyces</taxon>
    </lineage>
</organism>